<gene>
    <name evidence="1" type="primary">rpmF</name>
    <name type="ordered locus">GSU1599</name>
</gene>
<reference key="1">
    <citation type="journal article" date="2003" name="Science">
        <title>Genome of Geobacter sulfurreducens: metal reduction in subsurface environments.</title>
        <authorList>
            <person name="Methe B.A."/>
            <person name="Nelson K.E."/>
            <person name="Eisen J.A."/>
            <person name="Paulsen I.T."/>
            <person name="Nelson W.C."/>
            <person name="Heidelberg J.F."/>
            <person name="Wu D."/>
            <person name="Wu M."/>
            <person name="Ward N.L."/>
            <person name="Beanan M.J."/>
            <person name="Dodson R.J."/>
            <person name="Madupu R."/>
            <person name="Brinkac L.M."/>
            <person name="Daugherty S.C."/>
            <person name="DeBoy R.T."/>
            <person name="Durkin A.S."/>
            <person name="Gwinn M.L."/>
            <person name="Kolonay J.F."/>
            <person name="Sullivan S.A."/>
            <person name="Haft D.H."/>
            <person name="Selengut J."/>
            <person name="Davidsen T.M."/>
            <person name="Zafar N."/>
            <person name="White O."/>
            <person name="Tran B."/>
            <person name="Romero C."/>
            <person name="Forberger H.A."/>
            <person name="Weidman J.F."/>
            <person name="Khouri H.M."/>
            <person name="Feldblyum T.V."/>
            <person name="Utterback T.R."/>
            <person name="Van Aken S.E."/>
            <person name="Lovley D.R."/>
            <person name="Fraser C.M."/>
        </authorList>
    </citation>
    <scope>NUCLEOTIDE SEQUENCE [LARGE SCALE GENOMIC DNA]</scope>
    <source>
        <strain>ATCC 51573 / DSM 12127 / PCA</strain>
    </source>
</reference>
<protein>
    <recommendedName>
        <fullName evidence="1">Large ribosomal subunit protein bL32</fullName>
    </recommendedName>
    <alternativeName>
        <fullName evidence="2">50S ribosomal protein L32</fullName>
    </alternativeName>
</protein>
<accession>Q74CS3</accession>
<dbReference type="EMBL" id="AE017180">
    <property type="protein sequence ID" value="AAR34973.1"/>
    <property type="molecule type" value="Genomic_DNA"/>
</dbReference>
<dbReference type="RefSeq" id="NP_952650.1">
    <property type="nucleotide sequence ID" value="NC_002939.5"/>
</dbReference>
<dbReference type="RefSeq" id="WP_010942244.1">
    <property type="nucleotide sequence ID" value="NC_002939.5"/>
</dbReference>
<dbReference type="SMR" id="Q74CS3"/>
<dbReference type="STRING" id="243231.GSU1599"/>
<dbReference type="EnsemblBacteria" id="AAR34973">
    <property type="protein sequence ID" value="AAR34973"/>
    <property type="gene ID" value="GSU1599"/>
</dbReference>
<dbReference type="KEGG" id="gsu:GSU1599"/>
<dbReference type="PATRIC" id="fig|243231.5.peg.1640"/>
<dbReference type="eggNOG" id="COG0333">
    <property type="taxonomic scope" value="Bacteria"/>
</dbReference>
<dbReference type="HOGENOM" id="CLU_129084_1_3_7"/>
<dbReference type="InParanoid" id="Q74CS3"/>
<dbReference type="OrthoDB" id="9801927at2"/>
<dbReference type="Proteomes" id="UP000000577">
    <property type="component" value="Chromosome"/>
</dbReference>
<dbReference type="GO" id="GO:0015934">
    <property type="term" value="C:large ribosomal subunit"/>
    <property type="evidence" value="ECO:0007669"/>
    <property type="project" value="InterPro"/>
</dbReference>
<dbReference type="GO" id="GO:0003735">
    <property type="term" value="F:structural constituent of ribosome"/>
    <property type="evidence" value="ECO:0000318"/>
    <property type="project" value="GO_Central"/>
</dbReference>
<dbReference type="GO" id="GO:0006412">
    <property type="term" value="P:translation"/>
    <property type="evidence" value="ECO:0007669"/>
    <property type="project" value="UniProtKB-UniRule"/>
</dbReference>
<dbReference type="FunFam" id="1.20.5.640:FF:000001">
    <property type="entry name" value="50S ribosomal protein L32"/>
    <property type="match status" value="1"/>
</dbReference>
<dbReference type="Gene3D" id="1.20.5.640">
    <property type="entry name" value="Single helix bin"/>
    <property type="match status" value="1"/>
</dbReference>
<dbReference type="HAMAP" id="MF_00340">
    <property type="entry name" value="Ribosomal_bL32"/>
    <property type="match status" value="1"/>
</dbReference>
<dbReference type="InterPro" id="IPR002677">
    <property type="entry name" value="Ribosomal_bL32"/>
</dbReference>
<dbReference type="InterPro" id="IPR044957">
    <property type="entry name" value="Ribosomal_bL32_bact"/>
</dbReference>
<dbReference type="InterPro" id="IPR011332">
    <property type="entry name" value="Ribosomal_zn-bd"/>
</dbReference>
<dbReference type="NCBIfam" id="TIGR01031">
    <property type="entry name" value="rpmF_bact"/>
    <property type="match status" value="1"/>
</dbReference>
<dbReference type="PANTHER" id="PTHR35534">
    <property type="entry name" value="50S RIBOSOMAL PROTEIN L32"/>
    <property type="match status" value="1"/>
</dbReference>
<dbReference type="PANTHER" id="PTHR35534:SF1">
    <property type="entry name" value="LARGE RIBOSOMAL SUBUNIT PROTEIN BL32"/>
    <property type="match status" value="1"/>
</dbReference>
<dbReference type="Pfam" id="PF01783">
    <property type="entry name" value="Ribosomal_L32p"/>
    <property type="match status" value="1"/>
</dbReference>
<dbReference type="SUPFAM" id="SSF57829">
    <property type="entry name" value="Zn-binding ribosomal proteins"/>
    <property type="match status" value="1"/>
</dbReference>
<organism>
    <name type="scientific">Geobacter sulfurreducens (strain ATCC 51573 / DSM 12127 / PCA)</name>
    <dbReference type="NCBI Taxonomy" id="243231"/>
    <lineage>
        <taxon>Bacteria</taxon>
        <taxon>Pseudomonadati</taxon>
        <taxon>Thermodesulfobacteriota</taxon>
        <taxon>Desulfuromonadia</taxon>
        <taxon>Geobacterales</taxon>
        <taxon>Geobacteraceae</taxon>
        <taxon>Geobacter</taxon>
    </lineage>
</organism>
<comment type="similarity">
    <text evidence="1">Belongs to the bacterial ribosomal protein bL32 family.</text>
</comment>
<name>RL32_GEOSL</name>
<proteinExistence type="inferred from homology"/>
<feature type="chain" id="PRO_0000225727" description="Large ribosomal subunit protein bL32">
    <location>
        <begin position="1"/>
        <end position="60"/>
    </location>
</feature>
<sequence length="60" mass="6630">MAVPKKKTSKSRKNMRRAHDFLTAPAASVCPQCKSPKLPHRACASCGTYKGREVVKTEEI</sequence>
<evidence type="ECO:0000255" key="1">
    <source>
        <dbReference type="HAMAP-Rule" id="MF_00340"/>
    </source>
</evidence>
<evidence type="ECO:0000305" key="2"/>
<keyword id="KW-1185">Reference proteome</keyword>
<keyword id="KW-0687">Ribonucleoprotein</keyword>
<keyword id="KW-0689">Ribosomal protein</keyword>